<proteinExistence type="inferred from homology"/>
<dbReference type="EMBL" id="ADXC01000060">
    <property type="protein sequence ID" value="EGA77517.1"/>
    <property type="molecule type" value="Genomic_DNA"/>
</dbReference>
<dbReference type="HOGENOM" id="CLU_013228_0_0_1"/>
<dbReference type="OMA" id="EHTFSGF"/>
<dbReference type="OrthoDB" id="24780at4893"/>
<dbReference type="GO" id="GO:0005886">
    <property type="term" value="C:plasma membrane"/>
    <property type="evidence" value="ECO:0007669"/>
    <property type="project" value="UniProtKB-SubCell"/>
</dbReference>
<dbReference type="GO" id="GO:0070941">
    <property type="term" value="P:eisosome assembly"/>
    <property type="evidence" value="ECO:0007669"/>
    <property type="project" value="TreeGrafter"/>
</dbReference>
<dbReference type="InterPro" id="IPR024527">
    <property type="entry name" value="Eisosome1"/>
</dbReference>
<dbReference type="PANTHER" id="PTHR28298">
    <property type="entry name" value="EISOSOME PROTEIN 1"/>
    <property type="match status" value="1"/>
</dbReference>
<dbReference type="PANTHER" id="PTHR28298:SF1">
    <property type="entry name" value="EISOSOME PROTEIN 1"/>
    <property type="match status" value="1"/>
</dbReference>
<dbReference type="Pfam" id="PF12757">
    <property type="entry name" value="Eisosome1"/>
    <property type="match status" value="1"/>
</dbReference>
<comment type="function">
    <text evidence="1">Required for normal formation of eisosomes, large cytoplasmic protein assemblies that localize to specialized domains on plasma membrane and mark the site of endocytosis.</text>
</comment>
<comment type="subcellular location">
    <subcellularLocation>
        <location evidence="1">Cytoplasmic granule</location>
    </subcellularLocation>
    <subcellularLocation>
        <location evidence="1">Cell membrane</location>
        <topology evidence="1">Peripheral membrane protein</topology>
        <orientation evidence="1">Cytoplasmic side</orientation>
    </subcellularLocation>
    <text evidence="1">Localizes at the eisosomes.</text>
</comment>
<comment type="similarity">
    <text evidence="4">Belongs to the EIS1 family.</text>
</comment>
<name>EIS1_YEASV</name>
<sequence>MSLISAVEDRDIHNIGKTSGGGSRTSSITSSKKSLKHGSKSLRKPKVYQTTGELLSREALYKAKLKYGVYQSPAQSYSIGVSDAHAASDKAANLAHDNQTTVEAYKRMFIDPNATKAASKMGPKVVRNNSITSATSKTSXESQTKRKSKESPGAAASKAYSMTMETTSLSSQTNSRSYSITSASSVLSGASGSFNSTVNPKPKTLNLEKVLVGAEKKAESRIKERWEPEKTNFQYGVKTDEHGNLNQFSFSNEMMNNIMAKVDAPKAQDLQKVKKVSAEKEAKSMKFALGAANAVKDMHPGEDIDKSIALKAQKRETYLSQLTSQQVLTLARANVDRQLDIIEKSDMHRKLFTNMEYNKAAVAVAQSNHQKKTEFHNKINMGGGLFLSPEDITKIASGLISPVLGEVSERAEAQRAMDEEIAERTEAYNKSLNEWETMERSIISNDAKVLTTTANRHQTEKKTSQEKIKASFDALVARMDTKVAERETLLEDTKSKEIEFKKQMQQELKDEKARLDQDLEEWGKKCEQDITEARKEQEELLKPYHDDLANAEAEHKTLVEERDXINAEISRLQDAIVDHKRKISGYGNDLDAQKNRNIREDDKLLELGQTKESLESHLNDDVIILANKAKEQAELSTKEARLKQLEVDSLINERKSELNATXIELKKEKLXLLEAMKDVASARGDDKIDEEKVKKLIGMTSEEYLTQNKSVEKNVEDLPTQLEXIEEGDELKKEEIVGAETKNSGGDGVPVSTAAKEATETSSAVQTKEPEEKISIGNKSSGKEDANDCKSAEHSKEISVSQKAGNNKSLGVSPDSLEHTFSGFSQGSSIEDDQDAISNQEKK</sequence>
<reference key="1">
    <citation type="journal article" date="2011" name="PLoS Genet.">
        <title>Whole-genome comparison reveals novel genetic elements that characterize the genome of industrial strains of Saccharomyces cerevisiae.</title>
        <authorList>
            <person name="Borneman A.R."/>
            <person name="Desany B.A."/>
            <person name="Riches D."/>
            <person name="Affourtit J.P."/>
            <person name="Forgan A.H."/>
            <person name="Pretorius I.S."/>
            <person name="Egholm M."/>
            <person name="Chambers P.J."/>
        </authorList>
    </citation>
    <scope>NUCLEOTIDE SEQUENCE [LARGE SCALE GENOMIC DNA]</scope>
    <source>
        <strain>VIN 13</strain>
    </source>
</reference>
<gene>
    <name type="primary">EIS1</name>
    <name type="ORF">VIN13_3618</name>
</gene>
<evidence type="ECO:0000250" key="1"/>
<evidence type="ECO:0000250" key="2">
    <source>
        <dbReference type="UniProtKB" id="Q05050"/>
    </source>
</evidence>
<evidence type="ECO:0000256" key="3">
    <source>
        <dbReference type="SAM" id="MobiDB-lite"/>
    </source>
</evidence>
<evidence type="ECO:0000305" key="4"/>
<protein>
    <recommendedName>
        <fullName>Eisosome protein 1</fullName>
    </recommendedName>
</protein>
<organism>
    <name type="scientific">Saccharomyces cerevisiae (strain VIN 13)</name>
    <name type="common">Baker's yeast</name>
    <dbReference type="NCBI Taxonomy" id="764099"/>
    <lineage>
        <taxon>Eukaryota</taxon>
        <taxon>Fungi</taxon>
        <taxon>Dikarya</taxon>
        <taxon>Ascomycota</taxon>
        <taxon>Saccharomycotina</taxon>
        <taxon>Saccharomycetes</taxon>
        <taxon>Saccharomycetales</taxon>
        <taxon>Saccharomycetaceae</taxon>
        <taxon>Saccharomyces</taxon>
    </lineage>
</organism>
<feature type="initiator methionine" description="Removed" evidence="2">
    <location>
        <position position="1"/>
    </location>
</feature>
<feature type="chain" id="PRO_0000410807" description="Eisosome protein 1">
    <location>
        <begin position="2"/>
        <end position="843"/>
    </location>
</feature>
<feature type="region of interest" description="Disordered" evidence="3">
    <location>
        <begin position="13"/>
        <end position="44"/>
    </location>
</feature>
<feature type="region of interest" description="Disordered" evidence="3">
    <location>
        <begin position="120"/>
        <end position="176"/>
    </location>
</feature>
<feature type="region of interest" description="Disordered" evidence="3">
    <location>
        <begin position="708"/>
        <end position="843"/>
    </location>
</feature>
<feature type="compositionally biased region" description="Basic residues" evidence="3">
    <location>
        <begin position="33"/>
        <end position="44"/>
    </location>
</feature>
<feature type="compositionally biased region" description="Polar residues" evidence="3">
    <location>
        <begin position="127"/>
        <end position="142"/>
    </location>
</feature>
<feature type="compositionally biased region" description="Polar residues" evidence="3">
    <location>
        <begin position="163"/>
        <end position="176"/>
    </location>
</feature>
<feature type="compositionally biased region" description="Low complexity" evidence="3">
    <location>
        <begin position="752"/>
        <end position="764"/>
    </location>
</feature>
<feature type="compositionally biased region" description="Basic and acidic residues" evidence="3">
    <location>
        <begin position="781"/>
        <end position="797"/>
    </location>
</feature>
<feature type="compositionally biased region" description="Polar residues" evidence="3">
    <location>
        <begin position="798"/>
        <end position="810"/>
    </location>
</feature>
<feature type="modified residue" description="N-acetylserine" evidence="2">
    <location>
        <position position="2"/>
    </location>
</feature>
<feature type="modified residue" description="Phosphoserine" evidence="2">
    <location>
        <position position="2"/>
    </location>
</feature>
<feature type="modified residue" description="Phosphoserine" evidence="2">
    <location>
        <position position="88"/>
    </location>
</feature>
<feature type="modified residue" description="Phosphoserine" evidence="2">
    <location>
        <position position="130"/>
    </location>
</feature>
<feature type="modified residue" description="Phosphoserine" evidence="2">
    <location>
        <position position="182"/>
    </location>
</feature>
<feature type="modified residue" description="Phosphoserine" evidence="2">
    <location>
        <position position="401"/>
    </location>
</feature>
<feature type="modified residue" description="Phosphoserine" evidence="2">
    <location>
        <position position="584"/>
    </location>
</feature>
<feature type="modified residue" description="Phosphoserine" evidence="2">
    <location>
        <position position="710"/>
    </location>
</feature>
<feature type="modified residue" description="Phosphothreonine" evidence="2">
    <location>
        <position position="720"/>
    </location>
</feature>
<feature type="modified residue" description="Phosphoserine" evidence="2">
    <location>
        <position position="763"/>
    </location>
</feature>
<feature type="modified residue" description="Phosphoserine" evidence="2">
    <location>
        <position position="775"/>
    </location>
</feature>
<feature type="modified residue" description="Phosphoserine" evidence="2">
    <location>
        <position position="816"/>
    </location>
</feature>
<feature type="modified residue" description="Phosphoserine" evidence="2">
    <location>
        <position position="828"/>
    </location>
</feature>
<feature type="modified residue" description="Phosphoserine" evidence="2">
    <location>
        <position position="829"/>
    </location>
</feature>
<feature type="modified residue" description="Phosphoserine" evidence="2">
    <location>
        <position position="838"/>
    </location>
</feature>
<keyword id="KW-0007">Acetylation</keyword>
<keyword id="KW-1003">Cell membrane</keyword>
<keyword id="KW-0472">Membrane</keyword>
<keyword id="KW-0597">Phosphoprotein</keyword>
<accession>E7LYB2</accession>